<feature type="chain" id="PRO_0000449854" description="O-methyltransferase CTB2">
    <location>
        <begin position="1"/>
        <end position="462"/>
    </location>
</feature>
<feature type="active site" description="Proton acceptor" evidence="3">
    <location>
        <position position="340"/>
    </location>
</feature>
<feature type="binding site" evidence="3">
    <location>
        <position position="289"/>
    </location>
    <ligand>
        <name>S-adenosyl-L-methionine</name>
        <dbReference type="ChEBI" id="CHEBI:59789"/>
    </ligand>
</feature>
<comment type="function">
    <text evidence="1 2 4">O-methyltransferase; part of the gene cluster that mediates the biosynthesis of cercosporin, a light-activated, non-host-selective toxin (By similarity). The perylenequinone chromophore of cercosporin absorbs light energy to attain an electronically-activated triplet state and produces active oxygen species such as the hydroxyl radical, superoxide, hydrogen peroxide or singlet oxygen upon reaction with oxygen molecules (PubMed:11701851). These reactive oxygen species cause damage to various cellular components including lipids, proteins and nucleic acids (PubMed:11701851). The first step of cercosporin biosynthesis is performed by the polyketide synthase CTB1 which catalyzes the formation of nor-toralactone (By similarity). The starter unit acyltransferase (SAT) domain of CTB1 initiates polyketide extension by the selective utilization of acetyl-CoA, which is elongated to the heptaketide in the beta-ketoacyl synthase (KS) domain by successive condensations with six malonyl units introduced by the malonyl acyltransferase (MAT) domain. The product template (PT) domain catalyzes C4-C9 and C2-C11 aldol cyclizations and dehydrations to a trihydroxynaphthalene, which is thought to be delivered to the thioesterase (TE) domain for product release (By similarity). The bifunctional enzyme CTB3 then methylates nor-toralactone to toralactone before conducting an unusual oxidative aromatic ring opening (By similarity). The O-methyltransferase CTB2 further methylates the nascent OH-6 of the CBT3 product, blocking further oxidation at this site before the reductase CTB6 reduces the 2-oxopropyl ketone at position C7, giving naphthalene (By similarity). The FAD-dependent monooxygenase CTB5 in concert with the multicopper oxidase CTB12 are responsible for homodimerization of naphthalene with CTB7 installing the dioxepine moiety, finally producing cercosporin (By similarity). The fasciclin domain-containing protein CTB11 might act with CTB5 and CTB12 whereas the roles of CTB9 and CTB10 have still to be elucidated (By similarity).</text>
</comment>
<comment type="pathway">
    <text evidence="1">Mycotoxin biosynthesis.</text>
</comment>
<comment type="similarity">
    <text evidence="6">Belongs to the class I-like SAM-binding methyltransferase superfamily. Cation-independent O-methyltransferase family. COMT subfamily.</text>
</comment>
<organism>
    <name type="scientific">Cercospora beticola</name>
    <name type="common">Sugarbeet leaf spot fungus</name>
    <dbReference type="NCBI Taxonomy" id="122368"/>
    <lineage>
        <taxon>Eukaryota</taxon>
        <taxon>Fungi</taxon>
        <taxon>Dikarya</taxon>
        <taxon>Ascomycota</taxon>
        <taxon>Pezizomycotina</taxon>
        <taxon>Dothideomycetes</taxon>
        <taxon>Dothideomycetidae</taxon>
        <taxon>Mycosphaerellales</taxon>
        <taxon>Mycosphaerellaceae</taxon>
        <taxon>Cercospora</taxon>
    </lineage>
</organism>
<keyword id="KW-0489">Methyltransferase</keyword>
<keyword id="KW-0949">S-adenosyl-L-methionine</keyword>
<keyword id="KW-0808">Transferase</keyword>
<reference key="1">
    <citation type="journal article" date="2018" name="Proc. Natl. Acad. Sci. U.S.A.">
        <title>Gene cluster conservation provides insight into cercosporin biosynthesis and extends production to the genus Colletotrichum.</title>
        <authorList>
            <person name="de Jonge R."/>
            <person name="Ebert M.K."/>
            <person name="Huitt-Roehl C.R."/>
            <person name="Pal P."/>
            <person name="Suttle J.C."/>
            <person name="Spanner R.E."/>
            <person name="Neubauer J.D."/>
            <person name="Jurick W.M. II"/>
            <person name="Stott K.A."/>
            <person name="Secor G.A."/>
            <person name="Thomma B.P.H.J."/>
            <person name="Van de Peer Y."/>
            <person name="Townsend C.A."/>
            <person name="Bolton M.D."/>
        </authorList>
    </citation>
    <scope>NUCLEOTIDE SEQUENCE [LARGE SCALE GENOMIC DNA]</scope>
    <scope>FUNCTION</scope>
    <scope>PATHWAY</scope>
    <source>
        <strain>09-40</strain>
    </source>
</reference>
<reference key="2">
    <citation type="journal article" date="2000" name="Annu. Rev. Phytopathol.">
        <title>The photoactivated cercospora toxin cercosporin: contributions to plant disease and fundamental biology.</title>
        <authorList>
            <person name="Daub M.E."/>
            <person name="Ehrenshaft M."/>
        </authorList>
    </citation>
    <scope>REVIEW ON CERCOSPORIN</scope>
</reference>
<name>CTB2_CERBT</name>
<proteinExistence type="inferred from homology"/>
<sequence length="462" mass="50420">MANRIEADNLFELTAELVSASAKLHKFLDQKNLPQPSFDAPAPSVALNTANKPYYDARSAIVEAAEQLIRLVRGPRDTLLALSFEHCATASMQVVFKYKFANHIPLHGSTTYSKIAEAVGDGVTTALVERTIQHCASFGLFETIPGGYVTHNATSSLLVTDPDLEAWMYLSAVIAYPAGAAIPKAVEQYGVSSEATEAGYGVSIGRKIAQFQRFREPDGKKDHEMFARAMRGIAAGGAYDFRHAVDGGYPWHLLTEGAGHLVVDVGGGPGHVAMALAEKYPSLRFQVQDLPETVQVGAKNCPEHLRKHVTFVAHDFMTPQPAHEVQDGEGIVYFARFILHDWSDKYATKIVQALATGLRPQDRIILNEVVVPEAGQVGRETERRMHDRDLLMLMNLNGRERTQSAFEAIFASVTPKLRLQRVIHPEQGELSLIEVTLDGVELPAQANGVNGHANGTNGVNGH</sequence>
<evidence type="ECO:0000250" key="1">
    <source>
        <dbReference type="UniProtKB" id="A0ST41"/>
    </source>
</evidence>
<evidence type="ECO:0000250" key="2">
    <source>
        <dbReference type="UniProtKB" id="Q0UHZ9"/>
    </source>
</evidence>
<evidence type="ECO:0000255" key="3">
    <source>
        <dbReference type="PROSITE-ProRule" id="PRU01020"/>
    </source>
</evidence>
<evidence type="ECO:0000303" key="4">
    <source>
    </source>
</evidence>
<evidence type="ECO:0000303" key="5">
    <source>
    </source>
</evidence>
<evidence type="ECO:0000305" key="6"/>
<protein>
    <recommendedName>
        <fullName evidence="5">O-methyltransferase CTB2</fullName>
        <ecNumber evidence="1">2.1.1.-</ecNumber>
    </recommendedName>
    <alternativeName>
        <fullName evidence="5">Cercosporin toxin biosynthesis cluster protein 2</fullName>
    </alternativeName>
</protein>
<dbReference type="EC" id="2.1.1.-" evidence="1"/>
<dbReference type="EMBL" id="LKMD01000100">
    <property type="protein sequence ID" value="PIB02404.1"/>
    <property type="molecule type" value="Genomic_DNA"/>
</dbReference>
<dbReference type="RefSeq" id="XP_023460064.1">
    <property type="nucleotide sequence ID" value="XM_023593474.1"/>
</dbReference>
<dbReference type="SMR" id="A0A2G5ICZ9"/>
<dbReference type="GeneID" id="35424644"/>
<dbReference type="OrthoDB" id="2410195at2759"/>
<dbReference type="Proteomes" id="UP000230605">
    <property type="component" value="Chromosome 1"/>
</dbReference>
<dbReference type="GO" id="GO:0008171">
    <property type="term" value="F:O-methyltransferase activity"/>
    <property type="evidence" value="ECO:0007669"/>
    <property type="project" value="InterPro"/>
</dbReference>
<dbReference type="GO" id="GO:0032259">
    <property type="term" value="P:methylation"/>
    <property type="evidence" value="ECO:0007669"/>
    <property type="project" value="UniProtKB-KW"/>
</dbReference>
<dbReference type="GO" id="GO:0044550">
    <property type="term" value="P:secondary metabolite biosynthetic process"/>
    <property type="evidence" value="ECO:0007669"/>
    <property type="project" value="UniProtKB-ARBA"/>
</dbReference>
<dbReference type="Gene3D" id="3.40.50.150">
    <property type="entry name" value="Vaccinia Virus protein VP39"/>
    <property type="match status" value="1"/>
</dbReference>
<dbReference type="Gene3D" id="1.10.10.10">
    <property type="entry name" value="Winged helix-like DNA-binding domain superfamily/Winged helix DNA-binding domain"/>
    <property type="match status" value="1"/>
</dbReference>
<dbReference type="InterPro" id="IPR016461">
    <property type="entry name" value="COMT-like"/>
</dbReference>
<dbReference type="InterPro" id="IPR001077">
    <property type="entry name" value="O_MeTrfase_dom"/>
</dbReference>
<dbReference type="InterPro" id="IPR029063">
    <property type="entry name" value="SAM-dependent_MTases_sf"/>
</dbReference>
<dbReference type="InterPro" id="IPR036388">
    <property type="entry name" value="WH-like_DNA-bd_sf"/>
</dbReference>
<dbReference type="InterPro" id="IPR036390">
    <property type="entry name" value="WH_DNA-bd_sf"/>
</dbReference>
<dbReference type="PANTHER" id="PTHR43712:SF16">
    <property type="entry name" value="O-METHYLTRANSFERASE ELCB"/>
    <property type="match status" value="1"/>
</dbReference>
<dbReference type="PANTHER" id="PTHR43712">
    <property type="entry name" value="PUTATIVE (AFU_ORTHOLOGUE AFUA_4G14580)-RELATED"/>
    <property type="match status" value="1"/>
</dbReference>
<dbReference type="Pfam" id="PF00891">
    <property type="entry name" value="Methyltransf_2"/>
    <property type="match status" value="1"/>
</dbReference>
<dbReference type="SUPFAM" id="SSF53335">
    <property type="entry name" value="S-adenosyl-L-methionine-dependent methyltransferases"/>
    <property type="match status" value="1"/>
</dbReference>
<dbReference type="SUPFAM" id="SSF46785">
    <property type="entry name" value="Winged helix' DNA-binding domain"/>
    <property type="match status" value="1"/>
</dbReference>
<dbReference type="PROSITE" id="PS51683">
    <property type="entry name" value="SAM_OMT_II"/>
    <property type="match status" value="1"/>
</dbReference>
<gene>
    <name evidence="5" type="primary">CTB2</name>
    <name type="ORF">CB0940_00832</name>
</gene>
<accession>A0A2G5ICZ9</accession>